<dbReference type="EC" id="2.7.11.1" evidence="6"/>
<dbReference type="EMBL" id="CP000611">
    <property type="protein sequence ID" value="ABQ71734.1"/>
    <property type="molecule type" value="Genomic_DNA"/>
</dbReference>
<dbReference type="RefSeq" id="WP_003400356.1">
    <property type="nucleotide sequence ID" value="NZ_CP016972.1"/>
</dbReference>
<dbReference type="SMR" id="A5TY84"/>
<dbReference type="GeneID" id="45423973"/>
<dbReference type="KEGG" id="mra:MRA_0016"/>
<dbReference type="eggNOG" id="COG0515">
    <property type="taxonomic scope" value="Bacteria"/>
</dbReference>
<dbReference type="eggNOG" id="COG2815">
    <property type="taxonomic scope" value="Bacteria"/>
</dbReference>
<dbReference type="HOGENOM" id="CLU_000288_135_2_11"/>
<dbReference type="Proteomes" id="UP000001988">
    <property type="component" value="Chromosome"/>
</dbReference>
<dbReference type="GO" id="GO:0005886">
    <property type="term" value="C:plasma membrane"/>
    <property type="evidence" value="ECO:0007669"/>
    <property type="project" value="UniProtKB-SubCell"/>
</dbReference>
<dbReference type="GO" id="GO:0005524">
    <property type="term" value="F:ATP binding"/>
    <property type="evidence" value="ECO:0007669"/>
    <property type="project" value="UniProtKB-KW"/>
</dbReference>
<dbReference type="GO" id="GO:0004674">
    <property type="term" value="F:protein serine/threonine kinase activity"/>
    <property type="evidence" value="ECO:0007669"/>
    <property type="project" value="UniProtKB-KW"/>
</dbReference>
<dbReference type="GO" id="GO:0080090">
    <property type="term" value="P:regulation of primary metabolic process"/>
    <property type="evidence" value="ECO:0007669"/>
    <property type="project" value="UniProtKB-ARBA"/>
</dbReference>
<dbReference type="CDD" id="cd06577">
    <property type="entry name" value="PASTA_pknB"/>
    <property type="match status" value="4"/>
</dbReference>
<dbReference type="CDD" id="cd14014">
    <property type="entry name" value="STKc_PknB_like"/>
    <property type="match status" value="1"/>
</dbReference>
<dbReference type="FunFam" id="1.10.510.10:FF:000021">
    <property type="entry name" value="Serine/threonine protein kinase"/>
    <property type="match status" value="1"/>
</dbReference>
<dbReference type="FunFam" id="3.30.200.20:FF:000035">
    <property type="entry name" value="Serine/threonine protein kinase Stk1"/>
    <property type="match status" value="1"/>
</dbReference>
<dbReference type="Gene3D" id="3.30.10.20">
    <property type="match status" value="4"/>
</dbReference>
<dbReference type="Gene3D" id="3.30.200.20">
    <property type="entry name" value="Phosphorylase Kinase, domain 1"/>
    <property type="match status" value="1"/>
</dbReference>
<dbReference type="Gene3D" id="1.10.510.10">
    <property type="entry name" value="Transferase(Phosphotransferase) domain 1"/>
    <property type="match status" value="1"/>
</dbReference>
<dbReference type="InterPro" id="IPR011009">
    <property type="entry name" value="Kinase-like_dom_sf"/>
</dbReference>
<dbReference type="InterPro" id="IPR005543">
    <property type="entry name" value="PASTA_dom"/>
</dbReference>
<dbReference type="InterPro" id="IPR000719">
    <property type="entry name" value="Prot_kinase_dom"/>
</dbReference>
<dbReference type="InterPro" id="IPR017441">
    <property type="entry name" value="Protein_kinase_ATP_BS"/>
</dbReference>
<dbReference type="InterPro" id="IPR008271">
    <property type="entry name" value="Ser/Thr_kinase_AS"/>
</dbReference>
<dbReference type="NCBIfam" id="NF033483">
    <property type="entry name" value="PknB_PASTA_kin"/>
    <property type="match status" value="1"/>
</dbReference>
<dbReference type="PANTHER" id="PTHR43289">
    <property type="entry name" value="MITOGEN-ACTIVATED PROTEIN KINASE KINASE KINASE 20-RELATED"/>
    <property type="match status" value="1"/>
</dbReference>
<dbReference type="PANTHER" id="PTHR43289:SF6">
    <property type="entry name" value="SERINE_THREONINE-PROTEIN KINASE NEKL-3"/>
    <property type="match status" value="1"/>
</dbReference>
<dbReference type="Pfam" id="PF03793">
    <property type="entry name" value="PASTA"/>
    <property type="match status" value="4"/>
</dbReference>
<dbReference type="Pfam" id="PF00069">
    <property type="entry name" value="Pkinase"/>
    <property type="match status" value="1"/>
</dbReference>
<dbReference type="SMART" id="SM00740">
    <property type="entry name" value="PASTA"/>
    <property type="match status" value="4"/>
</dbReference>
<dbReference type="SMART" id="SM00220">
    <property type="entry name" value="S_TKc"/>
    <property type="match status" value="1"/>
</dbReference>
<dbReference type="SUPFAM" id="SSF56112">
    <property type="entry name" value="Protein kinase-like (PK-like)"/>
    <property type="match status" value="1"/>
</dbReference>
<dbReference type="PROSITE" id="PS51178">
    <property type="entry name" value="PASTA"/>
    <property type="match status" value="4"/>
</dbReference>
<dbReference type="PROSITE" id="PS00107">
    <property type="entry name" value="PROTEIN_KINASE_ATP"/>
    <property type="match status" value="1"/>
</dbReference>
<dbReference type="PROSITE" id="PS50011">
    <property type="entry name" value="PROTEIN_KINASE_DOM"/>
    <property type="match status" value="1"/>
</dbReference>
<dbReference type="PROSITE" id="PS00108">
    <property type="entry name" value="PROTEIN_KINASE_ST"/>
    <property type="match status" value="1"/>
</dbReference>
<name>PKNB_MYCTA</name>
<accession>A5TY84</accession>
<evidence type="ECO:0000250" key="1">
    <source>
        <dbReference type="UniProtKB" id="P9WI81"/>
    </source>
</evidence>
<evidence type="ECO:0000255" key="2"/>
<evidence type="ECO:0000255" key="3">
    <source>
        <dbReference type="PROSITE-ProRule" id="PRU00159"/>
    </source>
</evidence>
<evidence type="ECO:0000255" key="4">
    <source>
        <dbReference type="PROSITE-ProRule" id="PRU00528"/>
    </source>
</evidence>
<evidence type="ECO:0000256" key="5">
    <source>
        <dbReference type="SAM" id="MobiDB-lite"/>
    </source>
</evidence>
<evidence type="ECO:0000269" key="6">
    <source>
    </source>
</evidence>
<evidence type="ECO:0000305" key="7">
    <source>
    </source>
</evidence>
<evidence type="ECO:0000312" key="8">
    <source>
        <dbReference type="EMBL" id="ABQ71734.1"/>
    </source>
</evidence>
<gene>
    <name evidence="8" type="primary">pknB</name>
    <name evidence="8" type="ordered locus">MRA_0016</name>
</gene>
<comment type="function">
    <text evidence="1 6 7">A serine/threonine-protein kinase, acts on HupB in vitro (PubMed:24816602). Protein kinase that regulates many aspects of mycobacterial physiology, and is critical for growth in vitro and survival of the pathogen in the host. Is a key component of a signal transduction pathway that regulates cell growth, cell shape and cell division. Also catalyzes the phosphorylation of the core proteasome alpha-subunit (PrcA), and thereby regulates the proteolytic activity of the proteasome. Is a major regulator of the oxygen-dependent replication switch since PknB activity is necessary for reactivation of cells from the hypoxic state (By similarity). Shows a strong preference for Thr versus Ser as the phosphoacceptor (Probable).</text>
</comment>
<comment type="catalytic activity">
    <reaction evidence="7">
        <text>L-seryl-[protein] + ATP = O-phospho-L-seryl-[protein] + ADP + H(+)</text>
        <dbReference type="Rhea" id="RHEA:17989"/>
        <dbReference type="Rhea" id="RHEA-COMP:9863"/>
        <dbReference type="Rhea" id="RHEA-COMP:11604"/>
        <dbReference type="ChEBI" id="CHEBI:15378"/>
        <dbReference type="ChEBI" id="CHEBI:29999"/>
        <dbReference type="ChEBI" id="CHEBI:30616"/>
        <dbReference type="ChEBI" id="CHEBI:83421"/>
        <dbReference type="ChEBI" id="CHEBI:456216"/>
        <dbReference type="EC" id="2.7.11.1"/>
    </reaction>
</comment>
<comment type="catalytic activity">
    <reaction evidence="6">
        <text>L-threonyl-[protein] + ATP = O-phospho-L-threonyl-[protein] + ADP + H(+)</text>
        <dbReference type="Rhea" id="RHEA:46608"/>
        <dbReference type="Rhea" id="RHEA-COMP:11060"/>
        <dbReference type="Rhea" id="RHEA-COMP:11605"/>
        <dbReference type="ChEBI" id="CHEBI:15378"/>
        <dbReference type="ChEBI" id="CHEBI:30013"/>
        <dbReference type="ChEBI" id="CHEBI:30616"/>
        <dbReference type="ChEBI" id="CHEBI:61977"/>
        <dbReference type="ChEBI" id="CHEBI:456216"/>
        <dbReference type="EC" id="2.7.11.1"/>
    </reaction>
</comment>
<comment type="subunit">
    <text evidence="1">Homodimer.</text>
</comment>
<comment type="subcellular location">
    <subcellularLocation>
        <location evidence="1">Cell membrane</location>
        <topology evidence="2">Single-pass membrane protein</topology>
    </subcellularLocation>
    <text evidence="1">Localizes to septum and cell poles.</text>
</comment>
<comment type="induction">
    <text evidence="6">Transcribed at highest levels in early log-phase, decreases as cells grow older.</text>
</comment>
<comment type="PTM">
    <text evidence="6">Autophosphorylates.</text>
</comment>
<comment type="similarity">
    <text evidence="3">Belongs to the protein kinase superfamily. Ser/Thr protein kinase family.</text>
</comment>
<protein>
    <recommendedName>
        <fullName>Serine/threonine-protein kinase PknB</fullName>
        <ecNumber evidence="6">2.7.11.1</ecNumber>
    </recommendedName>
</protein>
<proteinExistence type="evidence at protein level"/>
<feature type="chain" id="PRO_0000458845" description="Serine/threonine-protein kinase PknB">
    <location>
        <begin position="1"/>
        <end position="626"/>
    </location>
</feature>
<feature type="transmembrane region" description="Helical" evidence="2">
    <location>
        <begin position="333"/>
        <end position="353"/>
    </location>
</feature>
<feature type="domain" description="Protein kinase" evidence="3">
    <location>
        <begin position="11"/>
        <end position="274"/>
    </location>
</feature>
<feature type="domain" description="PASTA 1" evidence="4">
    <location>
        <begin position="356"/>
        <end position="422"/>
    </location>
</feature>
<feature type="domain" description="PASTA 2" evidence="4">
    <location>
        <begin position="423"/>
        <end position="490"/>
    </location>
</feature>
<feature type="domain" description="PASTA 3" evidence="4">
    <location>
        <begin position="491"/>
        <end position="557"/>
    </location>
</feature>
<feature type="domain" description="PASTA 4" evidence="4">
    <location>
        <begin position="558"/>
        <end position="626"/>
    </location>
</feature>
<feature type="region of interest" description="Disordered" evidence="5">
    <location>
        <begin position="299"/>
        <end position="323"/>
    </location>
</feature>
<feature type="compositionally biased region" description="Basic and acidic residues" evidence="5">
    <location>
        <begin position="311"/>
        <end position="323"/>
    </location>
</feature>
<feature type="active site" description="Proton acceptor" evidence="3">
    <location>
        <position position="138"/>
    </location>
</feature>
<feature type="binding site" evidence="3">
    <location>
        <begin position="17"/>
        <end position="25"/>
    </location>
    <ligand>
        <name>ATP</name>
        <dbReference type="ChEBI" id="CHEBI:30616"/>
    </ligand>
</feature>
<feature type="binding site" evidence="3">
    <location>
        <position position="40"/>
    </location>
    <ligand>
        <name>ATP</name>
        <dbReference type="ChEBI" id="CHEBI:30616"/>
    </ligand>
</feature>
<organism>
    <name type="scientific">Mycobacterium tuberculosis (strain ATCC 25177 / H37Ra)</name>
    <dbReference type="NCBI Taxonomy" id="419947"/>
    <lineage>
        <taxon>Bacteria</taxon>
        <taxon>Bacillati</taxon>
        <taxon>Actinomycetota</taxon>
        <taxon>Actinomycetes</taxon>
        <taxon>Mycobacteriales</taxon>
        <taxon>Mycobacteriaceae</taxon>
        <taxon>Mycobacterium</taxon>
        <taxon>Mycobacterium tuberculosis complex</taxon>
    </lineage>
</organism>
<reference evidence="8" key="1">
    <citation type="journal article" date="2008" name="PLoS ONE">
        <title>Genetic basis of virulence attenuation revealed by comparative genomic analysis of Mycobacterium tuberculosis strain H37Ra versus H37Rv.</title>
        <authorList>
            <person name="Zheng H."/>
            <person name="Lu L."/>
            <person name="Wang B."/>
            <person name="Pu S."/>
            <person name="Zhang X."/>
            <person name="Zhu G."/>
            <person name="Shi W."/>
            <person name="Zhang L."/>
            <person name="Wang H."/>
            <person name="Wang S."/>
            <person name="Zhao G."/>
            <person name="Zhang Y."/>
        </authorList>
    </citation>
    <scope>NUCLEOTIDE SEQUENCE [LARGE SCALE GENOMIC DNA]</scope>
    <source>
        <strain>ATCC 25177 / H37Ra</strain>
    </source>
</reference>
<reference key="2">
    <citation type="journal article" date="2014" name="J. Bacteriol.">
        <title>HupB, a nucleoid-associated protein of Mycobacterium tuberculosis, is modified by serine/threonine protein kinases in vivo.</title>
        <authorList>
            <person name="Gupta M."/>
            <person name="Sajid A."/>
            <person name="Sharma K."/>
            <person name="Ghosh S."/>
            <person name="Arora G."/>
            <person name="Singh R."/>
            <person name="Nagaraja V."/>
            <person name="Tandon V."/>
            <person name="Singh Y."/>
        </authorList>
    </citation>
    <scope>FUNCTION</scope>
    <scope>CATALYTIC ACTIVITY</scope>
    <scope>INDUCTION</scope>
    <scope>AUTOPHOSPHORYLATION</scope>
    <source>
        <strain>ATCC 25177 / H37Ra</strain>
    </source>
</reference>
<sequence length="626" mass="66510">MTTPSHLSDRYELGEILGFGGMSEVHLARDLRLHRDVAVKVLRADLARDPSFYLRFRREAQNAAALNHPAIVAVYDTGEAETPAGPLPYIVMEYVDGVTLRDIVHTEGPMTPKRAIEVIADACQALNFSHQNGIIHRDVKPANIMISATNAVKVMDFGIARAIADSGNSVTQTAAVIGTAQYLSPEQARGDSVDARSDVYSLGCVLYEVLTGEPPFTGDSPVSVAYQHVREDPIPPSARHEGLSADLDAVVLKALAKNPENRYQTAAEMRADLVRVHNGEPPEAPKVLTDAERTSLLSSAAGNLSGPRTDPLPRQDLDDTDRDRSIGSVGRWVAVVAVLAVLTVVVTIAINTFGGITRDVQVPDVRGQSSADAIATLQNRGFKIRTLQKPDSTIPPDHVIGTDPAANTSVSAGDEITVNVSTGPEQREIPDVSTLTYAEAVKKLTAAGFGRFKQANSPSTPELVGKVIGTNPPANQTSAITNVVIIIVGSGPATKDIPDVAGQTVDVAQKNLNVYGFTKFSQASVDSPRPAGEVTGTNPPAGTTVPVDSVIELQVSKGNQFVMPDLSGMFWVDAEPRLRALGWTGMLDKGADVDAGGSQHNRVVYQNPPAGTGVNRDGIITLRFGQ</sequence>
<keyword id="KW-0067">ATP-binding</keyword>
<keyword id="KW-1003">Cell membrane</keyword>
<keyword id="KW-0418">Kinase</keyword>
<keyword id="KW-0472">Membrane</keyword>
<keyword id="KW-0547">Nucleotide-binding</keyword>
<keyword id="KW-0597">Phosphoprotein</keyword>
<keyword id="KW-1185">Reference proteome</keyword>
<keyword id="KW-0677">Repeat</keyword>
<keyword id="KW-0723">Serine/threonine-protein kinase</keyword>
<keyword id="KW-0808">Transferase</keyword>
<keyword id="KW-0812">Transmembrane</keyword>
<keyword id="KW-1133">Transmembrane helix</keyword>